<comment type="function">
    <text>Guanine nucleotide-binding proteins (G proteins) are involved as modulators or transducers in various transmembrane signaling systems.</text>
</comment>
<comment type="subunit">
    <text>G proteins are composed of 3 units; alpha, beta and gamma. The alpha chain contains the guanine nucleotide binding site.</text>
</comment>
<comment type="similarity">
    <text evidence="3">Belongs to the G-alpha family. G(q) subfamily.</text>
</comment>
<accession>O88302</accession>
<name>GNA15_RAT</name>
<protein>
    <recommendedName>
        <fullName>Guanine nucleotide-binding protein subunit alpha-15</fullName>
        <shortName>G alpha-15</shortName>
        <shortName>G-protein subunit alpha-15</shortName>
    </recommendedName>
</protein>
<sequence>MARSLTWGCCPWCLTEEEKTAARIDQEINKILLEQKKQERGELKLLLLGPGESGKSTFIKQMRIIHGAGYSEEDRRAFRLLVYQNIFVSMQAMIEAMDRLQIPFSRPDSKQHASLVMTQDPYKVSSFEKPYAVAMQYLWRDAGIRACYERRREFHLLDSAVYYLSHLERIAEDDYIPTAQDVLRSRMPTTGINEYCFSVQKTKLRIVDAGGQKSERKKWIHCFENVIALIYLASLSEYDQCLEENSQENRMKESLALFSTILELPWFKSTSVILFLNKTDILEDKIHTSHLASYFPSFQGPRRDAEAAKRFILDMYARVYASCAEPHDGGRKGSRARRLFAHFTCATDTHSVRSVFKDVRDSVLARYLDEINLL</sequence>
<keyword id="KW-0342">GTP-binding</keyword>
<keyword id="KW-0460">Magnesium</keyword>
<keyword id="KW-0479">Metal-binding</keyword>
<keyword id="KW-0547">Nucleotide-binding</keyword>
<keyword id="KW-1185">Reference proteome</keyword>
<keyword id="KW-0807">Transducer</keyword>
<evidence type="ECO:0000250" key="1"/>
<evidence type="ECO:0000255" key="2">
    <source>
        <dbReference type="PROSITE-ProRule" id="PRU01230"/>
    </source>
</evidence>
<evidence type="ECO:0000305" key="3"/>
<proteinExistence type="evidence at transcript level"/>
<gene>
    <name type="primary">Gna15</name>
</gene>
<dbReference type="EMBL" id="AB015308">
    <property type="protein sequence ID" value="BAA28827.1"/>
    <property type="molecule type" value="mRNA"/>
</dbReference>
<dbReference type="RefSeq" id="NP_445994.1">
    <property type="nucleotide sequence ID" value="NM_053542.1"/>
</dbReference>
<dbReference type="SMR" id="O88302"/>
<dbReference type="FunCoup" id="O88302">
    <property type="interactions" value="109"/>
</dbReference>
<dbReference type="STRING" id="10116.ENSRNOP00000007202"/>
<dbReference type="iPTMnet" id="O88302"/>
<dbReference type="PhosphoSitePlus" id="O88302"/>
<dbReference type="PaxDb" id="10116-ENSRNOP00000007202"/>
<dbReference type="GeneID" id="89788"/>
<dbReference type="KEGG" id="rno:89788"/>
<dbReference type="UCSC" id="RGD:619751">
    <property type="organism name" value="rat"/>
</dbReference>
<dbReference type="AGR" id="RGD:619751"/>
<dbReference type="CTD" id="2769"/>
<dbReference type="RGD" id="619751">
    <property type="gene designation" value="Gna15"/>
</dbReference>
<dbReference type="eggNOG" id="KOG0085">
    <property type="taxonomic scope" value="Eukaryota"/>
</dbReference>
<dbReference type="InParanoid" id="O88302"/>
<dbReference type="PhylomeDB" id="O88302"/>
<dbReference type="Reactome" id="R-RNO-112043">
    <property type="pathway name" value="PLC beta mediated events"/>
</dbReference>
<dbReference type="Reactome" id="R-RNO-202040">
    <property type="pathway name" value="G-protein activation"/>
</dbReference>
<dbReference type="Reactome" id="R-RNO-399997">
    <property type="pathway name" value="Acetylcholine regulates insulin secretion"/>
</dbReference>
<dbReference type="Reactome" id="R-RNO-416476">
    <property type="pathway name" value="G alpha (q) signalling events"/>
</dbReference>
<dbReference type="Reactome" id="R-RNO-418592">
    <property type="pathway name" value="ADP signalling through P2Y purinoceptor 1"/>
</dbReference>
<dbReference type="Reactome" id="R-RNO-428930">
    <property type="pathway name" value="Thromboxane signalling through TP receptor"/>
</dbReference>
<dbReference type="Reactome" id="R-RNO-434316">
    <property type="pathway name" value="Fatty Acids bound to GPR40 (FFAR1) regulate insulin secretion"/>
</dbReference>
<dbReference type="Reactome" id="R-RNO-456926">
    <property type="pathway name" value="Thrombin signalling through proteinase activated receptors (PARs)"/>
</dbReference>
<dbReference type="PRO" id="PR:O88302"/>
<dbReference type="Proteomes" id="UP000002494">
    <property type="component" value="Unplaced"/>
</dbReference>
<dbReference type="GO" id="GO:0005737">
    <property type="term" value="C:cytoplasm"/>
    <property type="evidence" value="ECO:0000318"/>
    <property type="project" value="GO_Central"/>
</dbReference>
<dbReference type="GO" id="GO:0005834">
    <property type="term" value="C:heterotrimeric G-protein complex"/>
    <property type="evidence" value="ECO:0000318"/>
    <property type="project" value="GO_Central"/>
</dbReference>
<dbReference type="GO" id="GO:0001664">
    <property type="term" value="F:G protein-coupled receptor binding"/>
    <property type="evidence" value="ECO:0000266"/>
    <property type="project" value="RGD"/>
</dbReference>
<dbReference type="GO" id="GO:0031683">
    <property type="term" value="F:G-protein beta/gamma-subunit complex binding"/>
    <property type="evidence" value="ECO:0000318"/>
    <property type="project" value="GO_Central"/>
</dbReference>
<dbReference type="GO" id="GO:0005525">
    <property type="term" value="F:GTP binding"/>
    <property type="evidence" value="ECO:0007669"/>
    <property type="project" value="UniProtKB-KW"/>
</dbReference>
<dbReference type="GO" id="GO:0003924">
    <property type="term" value="F:GTPase activity"/>
    <property type="evidence" value="ECO:0000318"/>
    <property type="project" value="GO_Central"/>
</dbReference>
<dbReference type="GO" id="GO:0046872">
    <property type="term" value="F:metal ion binding"/>
    <property type="evidence" value="ECO:0007669"/>
    <property type="project" value="UniProtKB-KW"/>
</dbReference>
<dbReference type="GO" id="GO:0001508">
    <property type="term" value="P:action potential"/>
    <property type="evidence" value="ECO:0000318"/>
    <property type="project" value="GO_Central"/>
</dbReference>
<dbReference type="GO" id="GO:0007188">
    <property type="term" value="P:adenylate cyclase-modulating G protein-coupled receptor signaling pathway"/>
    <property type="evidence" value="ECO:0000318"/>
    <property type="project" value="GO_Central"/>
</dbReference>
<dbReference type="GO" id="GO:0019722">
    <property type="term" value="P:calcium-mediated signaling"/>
    <property type="evidence" value="ECO:0000266"/>
    <property type="project" value="RGD"/>
</dbReference>
<dbReference type="GO" id="GO:0060158">
    <property type="term" value="P:phospholipase C-activating dopamine receptor signaling pathway"/>
    <property type="evidence" value="ECO:0000318"/>
    <property type="project" value="GO_Central"/>
</dbReference>
<dbReference type="GO" id="GO:0007200">
    <property type="term" value="P:phospholipase C-activating G protein-coupled receptor signaling pathway"/>
    <property type="evidence" value="ECO:0000315"/>
    <property type="project" value="RGD"/>
</dbReference>
<dbReference type="CDD" id="cd00066">
    <property type="entry name" value="G-alpha"/>
    <property type="match status" value="1"/>
</dbReference>
<dbReference type="FunFam" id="1.10.400.10:FF:000002">
    <property type="entry name" value="guanine nucleotide-binding protein G(Q) subunit alpha"/>
    <property type="match status" value="1"/>
</dbReference>
<dbReference type="FunFam" id="3.40.50.300:FF:000692">
    <property type="entry name" value="Guanine nucleotide-binding protein subunit alpha"/>
    <property type="match status" value="1"/>
</dbReference>
<dbReference type="FunFam" id="3.40.50.300:FF:000985">
    <property type="entry name" value="Guanine nucleotide-binding protein subunit alpha-15"/>
    <property type="match status" value="1"/>
</dbReference>
<dbReference type="Gene3D" id="1.10.400.10">
    <property type="entry name" value="GI Alpha 1, domain 2-like"/>
    <property type="match status" value="1"/>
</dbReference>
<dbReference type="Gene3D" id="3.40.50.300">
    <property type="entry name" value="P-loop containing nucleotide triphosphate hydrolases"/>
    <property type="match status" value="1"/>
</dbReference>
<dbReference type="InterPro" id="IPR000654">
    <property type="entry name" value="Gprotein_alpha_Q"/>
</dbReference>
<dbReference type="InterPro" id="IPR001019">
    <property type="entry name" value="Gprotein_alpha_su"/>
</dbReference>
<dbReference type="InterPro" id="IPR011025">
    <property type="entry name" value="GproteinA_insert"/>
</dbReference>
<dbReference type="InterPro" id="IPR027417">
    <property type="entry name" value="P-loop_NTPase"/>
</dbReference>
<dbReference type="PANTHER" id="PTHR10218">
    <property type="entry name" value="GTP-BINDING PROTEIN ALPHA SUBUNIT"/>
    <property type="match status" value="1"/>
</dbReference>
<dbReference type="PANTHER" id="PTHR10218:SF217">
    <property type="entry name" value="GUANINE NUCLEOTIDE-BINDING PROTEIN SUBUNIT ALPHA-15"/>
    <property type="match status" value="1"/>
</dbReference>
<dbReference type="Pfam" id="PF00503">
    <property type="entry name" value="G-alpha"/>
    <property type="match status" value="1"/>
</dbReference>
<dbReference type="PRINTS" id="PR00318">
    <property type="entry name" value="GPROTEINA"/>
</dbReference>
<dbReference type="PRINTS" id="PR00442">
    <property type="entry name" value="GPROTEINAQ"/>
</dbReference>
<dbReference type="SMART" id="SM00275">
    <property type="entry name" value="G_alpha"/>
    <property type="match status" value="1"/>
</dbReference>
<dbReference type="SUPFAM" id="SSF52540">
    <property type="entry name" value="P-loop containing nucleoside triphosphate hydrolases"/>
    <property type="match status" value="1"/>
</dbReference>
<dbReference type="SUPFAM" id="SSF47895">
    <property type="entry name" value="Transducin (alpha subunit), insertion domain"/>
    <property type="match status" value="1"/>
</dbReference>
<dbReference type="PROSITE" id="PS51882">
    <property type="entry name" value="G_ALPHA"/>
    <property type="match status" value="1"/>
</dbReference>
<reference key="1">
    <citation type="journal article" date="1998" name="Biochim. Biophys. Acta">
        <title>Identification of two alpha-subunit species of GTP-binding proteins, G alpha 15 and G alpha q, expressed in rat taste buds.</title>
        <authorList>
            <person name="Kusakabe Y."/>
            <person name="Yamaguchi E."/>
            <person name="Tanemura K."/>
            <person name="Kameyama K."/>
            <person name="Chiba N."/>
            <person name="Arai S."/>
            <person name="Emori Y."/>
            <person name="Abe K."/>
        </authorList>
    </citation>
    <scope>NUCLEOTIDE SEQUENCE [MRNA]</scope>
</reference>
<feature type="chain" id="PRO_0000203758" description="Guanine nucleotide-binding protein subunit alpha-15">
    <location>
        <begin position="1"/>
        <end position="374"/>
    </location>
</feature>
<feature type="domain" description="G-alpha" evidence="2">
    <location>
        <begin position="41"/>
        <end position="374"/>
    </location>
</feature>
<feature type="region of interest" description="G1 motif" evidence="2">
    <location>
        <begin position="44"/>
        <end position="57"/>
    </location>
</feature>
<feature type="region of interest" description="G2 motif" evidence="2">
    <location>
        <begin position="181"/>
        <end position="189"/>
    </location>
</feature>
<feature type="region of interest" description="G3 motif" evidence="2">
    <location>
        <begin position="204"/>
        <end position="213"/>
    </location>
</feature>
<feature type="region of interest" description="G4 motif" evidence="2">
    <location>
        <begin position="273"/>
        <end position="280"/>
    </location>
</feature>
<feature type="region of interest" description="G5 motif" evidence="2">
    <location>
        <begin position="344"/>
        <end position="349"/>
    </location>
</feature>
<feature type="binding site" evidence="1">
    <location>
        <begin position="49"/>
        <end position="56"/>
    </location>
    <ligand>
        <name>GTP</name>
        <dbReference type="ChEBI" id="CHEBI:37565"/>
    </ligand>
</feature>
<feature type="binding site" evidence="1">
    <location>
        <position position="56"/>
    </location>
    <ligand>
        <name>Mg(2+)</name>
        <dbReference type="ChEBI" id="CHEBI:18420"/>
    </ligand>
</feature>
<feature type="binding site" evidence="1">
    <location>
        <begin position="183"/>
        <end position="189"/>
    </location>
    <ligand>
        <name>GTP</name>
        <dbReference type="ChEBI" id="CHEBI:37565"/>
    </ligand>
</feature>
<feature type="binding site" evidence="1">
    <location>
        <position position="189"/>
    </location>
    <ligand>
        <name>Mg(2+)</name>
        <dbReference type="ChEBI" id="CHEBI:18420"/>
    </ligand>
</feature>
<feature type="binding site" evidence="1">
    <location>
        <begin position="208"/>
        <end position="212"/>
    </location>
    <ligand>
        <name>GTP</name>
        <dbReference type="ChEBI" id="CHEBI:37565"/>
    </ligand>
</feature>
<feature type="binding site" evidence="1">
    <location>
        <begin position="277"/>
        <end position="280"/>
    </location>
    <ligand>
        <name>GTP</name>
        <dbReference type="ChEBI" id="CHEBI:37565"/>
    </ligand>
</feature>
<feature type="binding site" evidence="1">
    <location>
        <position position="346"/>
    </location>
    <ligand>
        <name>GTP</name>
        <dbReference type="ChEBI" id="CHEBI:37565"/>
    </ligand>
</feature>
<organism>
    <name type="scientific">Rattus norvegicus</name>
    <name type="common">Rat</name>
    <dbReference type="NCBI Taxonomy" id="10116"/>
    <lineage>
        <taxon>Eukaryota</taxon>
        <taxon>Metazoa</taxon>
        <taxon>Chordata</taxon>
        <taxon>Craniata</taxon>
        <taxon>Vertebrata</taxon>
        <taxon>Euteleostomi</taxon>
        <taxon>Mammalia</taxon>
        <taxon>Eutheria</taxon>
        <taxon>Euarchontoglires</taxon>
        <taxon>Glires</taxon>
        <taxon>Rodentia</taxon>
        <taxon>Myomorpha</taxon>
        <taxon>Muroidea</taxon>
        <taxon>Muridae</taxon>
        <taxon>Murinae</taxon>
        <taxon>Rattus</taxon>
    </lineage>
</organism>